<organism>
    <name type="scientific">Saccharomyces cerevisiae (strain RM11-1a)</name>
    <name type="common">Baker's yeast</name>
    <dbReference type="NCBI Taxonomy" id="285006"/>
    <lineage>
        <taxon>Eukaryota</taxon>
        <taxon>Fungi</taxon>
        <taxon>Dikarya</taxon>
        <taxon>Ascomycota</taxon>
        <taxon>Saccharomycotina</taxon>
        <taxon>Saccharomycetes</taxon>
        <taxon>Saccharomycetales</taxon>
        <taxon>Saccharomycetaceae</taxon>
        <taxon>Saccharomyces</taxon>
    </lineage>
</organism>
<proteinExistence type="inferred from homology"/>
<reference key="1">
    <citation type="submission" date="2005-03" db="EMBL/GenBank/DDBJ databases">
        <title>Annotation of the Saccharomyces cerevisiae RM11-1a genome.</title>
        <authorList>
            <consortium name="The Broad Institute Genome Sequencing Platform"/>
            <person name="Birren B.W."/>
            <person name="Lander E.S."/>
            <person name="Galagan J.E."/>
            <person name="Nusbaum C."/>
            <person name="Devon K."/>
            <person name="Cuomo C."/>
            <person name="Jaffe D.B."/>
            <person name="Butler J."/>
            <person name="Alvarez P."/>
            <person name="Gnerre S."/>
            <person name="Grabherr M."/>
            <person name="Kleber M."/>
            <person name="Mauceli E.W."/>
            <person name="Brockman W."/>
            <person name="MacCallum I.A."/>
            <person name="Rounsley S."/>
            <person name="Young S.K."/>
            <person name="LaButti K."/>
            <person name="Pushparaj V."/>
            <person name="DeCaprio D."/>
            <person name="Crawford M."/>
            <person name="Koehrsen M."/>
            <person name="Engels R."/>
            <person name="Montgomery P."/>
            <person name="Pearson M."/>
            <person name="Howarth C."/>
            <person name="Larson L."/>
            <person name="Luoma S."/>
            <person name="White J."/>
            <person name="O'Leary S."/>
            <person name="Kodira C.D."/>
            <person name="Zeng Q."/>
            <person name="Yandava C."/>
            <person name="Alvarado L."/>
            <person name="Pratt S."/>
            <person name="Kruglyak L."/>
        </authorList>
    </citation>
    <scope>NUCLEOTIDE SEQUENCE [LARGE SCALE GENOMIC DNA]</scope>
    <source>
        <strain>RM11-1a</strain>
    </source>
</reference>
<gene>
    <name type="primary">SOL3</name>
    <name type="ORF">SCRG_04875</name>
</gene>
<dbReference type="EC" id="3.1.1.31"/>
<dbReference type="EMBL" id="CH408053">
    <property type="protein sequence ID" value="EDV09208.1"/>
    <property type="molecule type" value="Genomic_DNA"/>
</dbReference>
<dbReference type="SMR" id="B3LSS7"/>
<dbReference type="HOGENOM" id="CLU_053947_0_1_1"/>
<dbReference type="OrthoDB" id="12770at4893"/>
<dbReference type="UniPathway" id="UPA00115">
    <property type="reaction ID" value="UER00409"/>
</dbReference>
<dbReference type="Proteomes" id="UP000008335">
    <property type="component" value="Unassembled WGS sequence"/>
</dbReference>
<dbReference type="GO" id="GO:0005737">
    <property type="term" value="C:cytoplasm"/>
    <property type="evidence" value="ECO:0007669"/>
    <property type="project" value="UniProtKB-SubCell"/>
</dbReference>
<dbReference type="GO" id="GO:0005634">
    <property type="term" value="C:nucleus"/>
    <property type="evidence" value="ECO:0007669"/>
    <property type="project" value="UniProtKB-SubCell"/>
</dbReference>
<dbReference type="GO" id="GO:0017057">
    <property type="term" value="F:6-phosphogluconolactonase activity"/>
    <property type="evidence" value="ECO:0007669"/>
    <property type="project" value="UniProtKB-EC"/>
</dbReference>
<dbReference type="GO" id="GO:0005975">
    <property type="term" value="P:carbohydrate metabolic process"/>
    <property type="evidence" value="ECO:0007669"/>
    <property type="project" value="InterPro"/>
</dbReference>
<dbReference type="GO" id="GO:0006098">
    <property type="term" value="P:pentose-phosphate shunt"/>
    <property type="evidence" value="ECO:0007669"/>
    <property type="project" value="UniProtKB-UniPathway"/>
</dbReference>
<dbReference type="CDD" id="cd01400">
    <property type="entry name" value="6PGL"/>
    <property type="match status" value="1"/>
</dbReference>
<dbReference type="FunFam" id="3.40.50.1360:FF:000005">
    <property type="entry name" value="6-phosphogluconolactonase"/>
    <property type="match status" value="1"/>
</dbReference>
<dbReference type="Gene3D" id="3.40.50.1360">
    <property type="match status" value="1"/>
</dbReference>
<dbReference type="InterPro" id="IPR005900">
    <property type="entry name" value="6-phosphogluconolactonase_DevB"/>
</dbReference>
<dbReference type="InterPro" id="IPR006148">
    <property type="entry name" value="Glc/Gal-6P_isomerase"/>
</dbReference>
<dbReference type="InterPro" id="IPR037171">
    <property type="entry name" value="NagB/RpiA_transferase-like"/>
</dbReference>
<dbReference type="InterPro" id="IPR039104">
    <property type="entry name" value="PGLS"/>
</dbReference>
<dbReference type="NCBIfam" id="TIGR01198">
    <property type="entry name" value="pgl"/>
    <property type="match status" value="1"/>
</dbReference>
<dbReference type="PANTHER" id="PTHR11054">
    <property type="entry name" value="6-PHOSPHOGLUCONOLACTONASE"/>
    <property type="match status" value="1"/>
</dbReference>
<dbReference type="PANTHER" id="PTHR11054:SF24">
    <property type="entry name" value="6-PHOSPHOGLUCONOLACTONASE 3-RELATED"/>
    <property type="match status" value="1"/>
</dbReference>
<dbReference type="Pfam" id="PF01182">
    <property type="entry name" value="Glucosamine_iso"/>
    <property type="match status" value="1"/>
</dbReference>
<dbReference type="SUPFAM" id="SSF100950">
    <property type="entry name" value="NagB/RpiA/CoA transferase-like"/>
    <property type="match status" value="1"/>
</dbReference>
<feature type="chain" id="PRO_0000377634" description="6-phosphogluconolactonase 3">
    <location>
        <begin position="1"/>
        <end position="249"/>
    </location>
</feature>
<sequence length="249" mass="27784">MVTVGVFSERASLTHQLGEFIVKKQDEALQKKSDFKVSVSGGSLIDALYESLVADESLSSRVQWSKWQIYFSDERIVPLTDADSNYGAFKRAVLDKLPSTSQPNVYPMDESLIGSDAESNNKIAAEYERIVPQVLDLVLLGCGPDGHTCSLFPGETHRYLLNETTKRVAWCHDSPKPPSDRITFTLPVLKDAKALCFVAEGSSKQNIMHEIFDLKNDQLPTALVNKLFGEKTSWFVNEEAFGKVQTKTF</sequence>
<accession>B3LSS7</accession>
<keyword id="KW-0963">Cytoplasm</keyword>
<keyword id="KW-0378">Hydrolase</keyword>
<keyword id="KW-0539">Nucleus</keyword>
<protein>
    <recommendedName>
        <fullName>6-phosphogluconolactonase 3</fullName>
        <shortName>6PGL</shortName>
        <ecNumber>3.1.1.31</ecNumber>
    </recommendedName>
</protein>
<evidence type="ECO:0000250" key="1"/>
<evidence type="ECO:0000305" key="2"/>
<name>SOL3_YEAS1</name>
<comment type="function">
    <text evidence="1">Hydrolysis of 6-phosphogluconolactone to 6-phosphogluconate.</text>
</comment>
<comment type="catalytic activity">
    <reaction>
        <text>6-phospho-D-glucono-1,5-lactone + H2O = 6-phospho-D-gluconate + H(+)</text>
        <dbReference type="Rhea" id="RHEA:12556"/>
        <dbReference type="ChEBI" id="CHEBI:15377"/>
        <dbReference type="ChEBI" id="CHEBI:15378"/>
        <dbReference type="ChEBI" id="CHEBI:57955"/>
        <dbReference type="ChEBI" id="CHEBI:58759"/>
        <dbReference type="EC" id="3.1.1.31"/>
    </reaction>
</comment>
<comment type="pathway">
    <text>Carbohydrate degradation; pentose phosphate pathway; D-ribulose 5-phosphate from D-glucose 6-phosphate (oxidative stage): step 2/3.</text>
</comment>
<comment type="subcellular location">
    <subcellularLocation>
        <location evidence="1">Cytoplasm</location>
    </subcellularLocation>
    <subcellularLocation>
        <location evidence="1">Nucleus</location>
    </subcellularLocation>
</comment>
<comment type="similarity">
    <text evidence="2">Belongs to the glucosamine/galactosamine-6-phosphate isomerase family. 6-phosphogluconolactonase subfamily.</text>
</comment>